<feature type="chain" id="PRO_0000126686" description="Phenylalanine--tRNA ligase alpha subunit">
    <location>
        <begin position="1"/>
        <end position="341"/>
    </location>
</feature>
<feature type="binding site" evidence="1">
    <location>
        <position position="256"/>
    </location>
    <ligand>
        <name>Mg(2+)</name>
        <dbReference type="ChEBI" id="CHEBI:18420"/>
        <note>shared with beta subunit</note>
    </ligand>
</feature>
<keyword id="KW-0030">Aminoacyl-tRNA synthetase</keyword>
<keyword id="KW-0067">ATP-binding</keyword>
<keyword id="KW-0963">Cytoplasm</keyword>
<keyword id="KW-0436">Ligase</keyword>
<keyword id="KW-0460">Magnesium</keyword>
<keyword id="KW-0479">Metal-binding</keyword>
<keyword id="KW-0547">Nucleotide-binding</keyword>
<keyword id="KW-0648">Protein biosynthesis</keyword>
<evidence type="ECO:0000250" key="1"/>
<evidence type="ECO:0000305" key="2"/>
<dbReference type="EC" id="6.1.1.20"/>
<dbReference type="EMBL" id="AE002160">
    <property type="protein sequence ID" value="AAF39096.1"/>
    <property type="molecule type" value="Genomic_DNA"/>
</dbReference>
<dbReference type="PIR" id="F81727">
    <property type="entry name" value="F81727"/>
</dbReference>
<dbReference type="RefSeq" id="WP_010229860.1">
    <property type="nucleotide sequence ID" value="NZ_CP063055.1"/>
</dbReference>
<dbReference type="SMR" id="Q9PL83"/>
<dbReference type="GeneID" id="1246392"/>
<dbReference type="KEGG" id="cmu:TC_0224"/>
<dbReference type="eggNOG" id="COG0016">
    <property type="taxonomic scope" value="Bacteria"/>
</dbReference>
<dbReference type="HOGENOM" id="CLU_025086_0_1_0"/>
<dbReference type="OrthoDB" id="9800719at2"/>
<dbReference type="Proteomes" id="UP000000800">
    <property type="component" value="Chromosome"/>
</dbReference>
<dbReference type="GO" id="GO:0005737">
    <property type="term" value="C:cytoplasm"/>
    <property type="evidence" value="ECO:0007669"/>
    <property type="project" value="UniProtKB-SubCell"/>
</dbReference>
<dbReference type="GO" id="GO:0005524">
    <property type="term" value="F:ATP binding"/>
    <property type="evidence" value="ECO:0007669"/>
    <property type="project" value="UniProtKB-UniRule"/>
</dbReference>
<dbReference type="GO" id="GO:0000287">
    <property type="term" value="F:magnesium ion binding"/>
    <property type="evidence" value="ECO:0007669"/>
    <property type="project" value="UniProtKB-UniRule"/>
</dbReference>
<dbReference type="GO" id="GO:0004826">
    <property type="term" value="F:phenylalanine-tRNA ligase activity"/>
    <property type="evidence" value="ECO:0007669"/>
    <property type="project" value="UniProtKB-UniRule"/>
</dbReference>
<dbReference type="GO" id="GO:0000049">
    <property type="term" value="F:tRNA binding"/>
    <property type="evidence" value="ECO:0007669"/>
    <property type="project" value="InterPro"/>
</dbReference>
<dbReference type="GO" id="GO:0006432">
    <property type="term" value="P:phenylalanyl-tRNA aminoacylation"/>
    <property type="evidence" value="ECO:0007669"/>
    <property type="project" value="UniProtKB-UniRule"/>
</dbReference>
<dbReference type="CDD" id="cd00496">
    <property type="entry name" value="PheRS_alpha_core"/>
    <property type="match status" value="1"/>
</dbReference>
<dbReference type="Gene3D" id="3.30.930.10">
    <property type="entry name" value="Bira Bifunctional Protein, Domain 2"/>
    <property type="match status" value="1"/>
</dbReference>
<dbReference type="HAMAP" id="MF_00281">
    <property type="entry name" value="Phe_tRNA_synth_alpha1"/>
    <property type="match status" value="1"/>
</dbReference>
<dbReference type="InterPro" id="IPR006195">
    <property type="entry name" value="aa-tRNA-synth_II"/>
</dbReference>
<dbReference type="InterPro" id="IPR045864">
    <property type="entry name" value="aa-tRNA-synth_II/BPL/LPL"/>
</dbReference>
<dbReference type="InterPro" id="IPR004529">
    <property type="entry name" value="Phe-tRNA-synth_IIc_asu"/>
</dbReference>
<dbReference type="InterPro" id="IPR004188">
    <property type="entry name" value="Phe-tRNA_ligase_II_N"/>
</dbReference>
<dbReference type="InterPro" id="IPR022911">
    <property type="entry name" value="Phe_tRNA_ligase_alpha1_bac"/>
</dbReference>
<dbReference type="InterPro" id="IPR002319">
    <property type="entry name" value="Phenylalanyl-tRNA_Synthase"/>
</dbReference>
<dbReference type="InterPro" id="IPR010978">
    <property type="entry name" value="tRNA-bd_arm"/>
</dbReference>
<dbReference type="NCBIfam" id="TIGR00468">
    <property type="entry name" value="pheS"/>
    <property type="match status" value="1"/>
</dbReference>
<dbReference type="PANTHER" id="PTHR11538:SF41">
    <property type="entry name" value="PHENYLALANINE--TRNA LIGASE, MITOCHONDRIAL"/>
    <property type="match status" value="1"/>
</dbReference>
<dbReference type="PANTHER" id="PTHR11538">
    <property type="entry name" value="PHENYLALANYL-TRNA SYNTHETASE"/>
    <property type="match status" value="1"/>
</dbReference>
<dbReference type="Pfam" id="PF02912">
    <property type="entry name" value="Phe_tRNA-synt_N"/>
    <property type="match status" value="1"/>
</dbReference>
<dbReference type="Pfam" id="PF01409">
    <property type="entry name" value="tRNA-synt_2d"/>
    <property type="match status" value="1"/>
</dbReference>
<dbReference type="SUPFAM" id="SSF55681">
    <property type="entry name" value="Class II aaRS and biotin synthetases"/>
    <property type="match status" value="1"/>
</dbReference>
<dbReference type="SUPFAM" id="SSF46589">
    <property type="entry name" value="tRNA-binding arm"/>
    <property type="match status" value="1"/>
</dbReference>
<dbReference type="PROSITE" id="PS50862">
    <property type="entry name" value="AA_TRNA_LIGASE_II"/>
    <property type="match status" value="1"/>
</dbReference>
<comment type="catalytic activity">
    <reaction>
        <text>tRNA(Phe) + L-phenylalanine + ATP = L-phenylalanyl-tRNA(Phe) + AMP + diphosphate + H(+)</text>
        <dbReference type="Rhea" id="RHEA:19413"/>
        <dbReference type="Rhea" id="RHEA-COMP:9668"/>
        <dbReference type="Rhea" id="RHEA-COMP:9699"/>
        <dbReference type="ChEBI" id="CHEBI:15378"/>
        <dbReference type="ChEBI" id="CHEBI:30616"/>
        <dbReference type="ChEBI" id="CHEBI:33019"/>
        <dbReference type="ChEBI" id="CHEBI:58095"/>
        <dbReference type="ChEBI" id="CHEBI:78442"/>
        <dbReference type="ChEBI" id="CHEBI:78531"/>
        <dbReference type="ChEBI" id="CHEBI:456215"/>
        <dbReference type="EC" id="6.1.1.20"/>
    </reaction>
</comment>
<comment type="cofactor">
    <cofactor evidence="1">
        <name>Mg(2+)</name>
        <dbReference type="ChEBI" id="CHEBI:18420"/>
    </cofactor>
    <text evidence="1">Binds 2 magnesium ions per tetramer.</text>
</comment>
<comment type="subunit">
    <text evidence="1">Tetramer of two alpha and two beta subunits.</text>
</comment>
<comment type="subcellular location">
    <subcellularLocation>
        <location evidence="1">Cytoplasm</location>
    </subcellularLocation>
</comment>
<comment type="similarity">
    <text evidence="2">Belongs to the class-II aminoacyl-tRNA synthetase family. Phe-tRNA synthetase alpha subunit type 1 subfamily.</text>
</comment>
<name>SYFA_CHLMU</name>
<organism>
    <name type="scientific">Chlamydia muridarum (strain MoPn / Nigg)</name>
    <dbReference type="NCBI Taxonomy" id="243161"/>
    <lineage>
        <taxon>Bacteria</taxon>
        <taxon>Pseudomonadati</taxon>
        <taxon>Chlamydiota</taxon>
        <taxon>Chlamydiia</taxon>
        <taxon>Chlamydiales</taxon>
        <taxon>Chlamydiaceae</taxon>
        <taxon>Chlamydia/Chlamydophila group</taxon>
        <taxon>Chlamydia</taxon>
    </lineage>
</organism>
<reference key="1">
    <citation type="journal article" date="2000" name="Nucleic Acids Res.">
        <title>Genome sequences of Chlamydia trachomatis MoPn and Chlamydia pneumoniae AR39.</title>
        <authorList>
            <person name="Read T.D."/>
            <person name="Brunham R.C."/>
            <person name="Shen C."/>
            <person name="Gill S.R."/>
            <person name="Heidelberg J.F."/>
            <person name="White O."/>
            <person name="Hickey E.K."/>
            <person name="Peterson J.D."/>
            <person name="Utterback T.R."/>
            <person name="Berry K.J."/>
            <person name="Bass S."/>
            <person name="Linher K.D."/>
            <person name="Weidman J.F."/>
            <person name="Khouri H.M."/>
            <person name="Craven B."/>
            <person name="Bowman C."/>
            <person name="Dodson R.J."/>
            <person name="Gwinn M.L."/>
            <person name="Nelson W.C."/>
            <person name="DeBoy R.T."/>
            <person name="Kolonay J.F."/>
            <person name="McClarty G."/>
            <person name="Salzberg S.L."/>
            <person name="Eisen J.A."/>
            <person name="Fraser C.M."/>
        </authorList>
    </citation>
    <scope>NUCLEOTIDE SEQUENCE [LARGE SCALE GENOMIC DNA]</scope>
    <source>
        <strain>MoPn / Nigg</strain>
    </source>
</reference>
<gene>
    <name type="primary">pheS</name>
    <name type="ordered locus">TC_0224</name>
</gene>
<protein>
    <recommendedName>
        <fullName>Phenylalanine--tRNA ligase alpha subunit</fullName>
        <ecNumber>6.1.1.20</ecNumber>
    </recommendedName>
    <alternativeName>
        <fullName>Phenylalanyl-tRNA synthetase alpha subunit</fullName>
        <shortName>PheRS</shortName>
    </alternativeName>
</protein>
<accession>Q9PL83</accession>
<proteinExistence type="inferred from homology"/>
<sequence length="341" mass="38781">MTIQEELEAVKQQFSCDLSLVHSSKDLFDLKVKYLGKKGIFRGFADQLRECPVEQKATIGASINACKQYIEEVLLEKSQVILAKEEAEEFLKEKVDVSLPGEDAPLGGKHIIKKVLDDVVDIFVRFGFCVREAPNIESEKNNFSLLNFEEDHPARQMQDTFYLDPVTVLRTHTSNVQSRELARNKPPVRVVAPGECFRNEDISARSHVTFHQVEAFHVDRDVSFSDLTSMLSGFYHIFFGRKVELRYRHSYFPFVEPGIEVDISCECRGAGCSLCKHSGWLEVAGAGMIHPNVLRQANIDPEEYSGYALGMGIERLAMLKYGISDIRLFSENDLRFLRQFS</sequence>